<accession>Q924W6</accession>
<accession>E9QKN7</accession>
<accession>E9QLR8</accession>
<accession>Q5SEK4</accession>
<accession>Q5SEK5</accession>
<protein>
    <recommendedName>
        <fullName>Tripartite motif-containing protein 66</fullName>
    </recommendedName>
    <alternativeName>
        <fullName>Transcriptional intermediary factor 1 delta</fullName>
    </alternativeName>
</protein>
<dbReference type="EMBL" id="AJ307670">
    <property type="protein sequence ID" value="CAC38114.1"/>
    <property type="molecule type" value="Genomic_DNA"/>
</dbReference>
<dbReference type="EMBL" id="AY572454">
    <property type="protein sequence ID" value="AAS78676.1"/>
    <property type="molecule type" value="mRNA"/>
</dbReference>
<dbReference type="EMBL" id="AY572455">
    <property type="protein sequence ID" value="AAS78677.1"/>
    <property type="molecule type" value="mRNA"/>
</dbReference>
<dbReference type="EMBL" id="AC124457">
    <property type="status" value="NOT_ANNOTATED_CDS"/>
    <property type="molecule type" value="Genomic_DNA"/>
</dbReference>
<dbReference type="CCDS" id="CCDS40082.1">
    <molecule id="Q924W6-3"/>
</dbReference>
<dbReference type="CCDS" id="CCDS52360.1">
    <molecule id="Q924W6-1"/>
</dbReference>
<dbReference type="RefSeq" id="NP_001164383.1">
    <molecule id="Q924W6-1"/>
    <property type="nucleotide sequence ID" value="NM_001170912.1"/>
</dbReference>
<dbReference type="RefSeq" id="NP_862901.3">
    <molecule id="Q924W6-3"/>
    <property type="nucleotide sequence ID" value="NM_181853.4"/>
</dbReference>
<dbReference type="RefSeq" id="XP_006508022.1">
    <molecule id="Q924W6-3"/>
    <property type="nucleotide sequence ID" value="XM_006507959.2"/>
</dbReference>
<dbReference type="RefSeq" id="XP_006508023.1">
    <molecule id="Q924W6-3"/>
    <property type="nucleotide sequence ID" value="XM_006507960.4"/>
</dbReference>
<dbReference type="RefSeq" id="XP_006508024.1">
    <molecule id="Q924W6-3"/>
    <property type="nucleotide sequence ID" value="XM_006507961.5"/>
</dbReference>
<dbReference type="RefSeq" id="XP_006508025.1">
    <molecule id="Q924W6-3"/>
    <property type="nucleotide sequence ID" value="XM_006507962.2"/>
</dbReference>
<dbReference type="RefSeq" id="XP_011240137.1">
    <molecule id="Q924W6-3"/>
    <property type="nucleotide sequence ID" value="XM_011241835.4"/>
</dbReference>
<dbReference type="PDB" id="7EBJ">
    <property type="method" value="X-ray"/>
    <property type="resolution" value="1.80 A"/>
    <property type="chains" value="A=992-1175"/>
</dbReference>
<dbReference type="PDB" id="7EBK">
    <property type="method" value="X-ray"/>
    <property type="resolution" value="1.74 A"/>
    <property type="chains" value="A=992-1180"/>
</dbReference>
<dbReference type="PDBsum" id="7EBJ"/>
<dbReference type="PDBsum" id="7EBK"/>
<dbReference type="SMR" id="Q924W6"/>
<dbReference type="BioGRID" id="236997">
    <property type="interactions" value="4"/>
</dbReference>
<dbReference type="FunCoup" id="Q924W6">
    <property type="interactions" value="605"/>
</dbReference>
<dbReference type="STRING" id="10090.ENSMUSP00000102352"/>
<dbReference type="GlyGen" id="Q924W6">
    <property type="glycosylation" value="1 site"/>
</dbReference>
<dbReference type="iPTMnet" id="Q924W6"/>
<dbReference type="PhosphoSitePlus" id="Q924W6"/>
<dbReference type="PaxDb" id="10090-ENSMUSP00000102352"/>
<dbReference type="ProteomicsDB" id="259328">
    <molecule id="Q924W6-1"/>
</dbReference>
<dbReference type="ProteomicsDB" id="259329">
    <molecule id="Q924W6-2"/>
</dbReference>
<dbReference type="ProteomicsDB" id="364039"/>
<dbReference type="Antibodypedia" id="5888">
    <property type="antibodies" value="24 antibodies from 12 providers"/>
</dbReference>
<dbReference type="DNASU" id="330627"/>
<dbReference type="Ensembl" id="ENSMUST00000033339.8">
    <molecule id="Q924W6-3"/>
    <property type="protein sequence ID" value="ENSMUSP00000033339.7"/>
    <property type="gene ID" value="ENSMUSG00000031026.16"/>
</dbReference>
<dbReference type="Ensembl" id="ENSMUST00000106741.10">
    <molecule id="Q924W6-1"/>
    <property type="protein sequence ID" value="ENSMUSP00000102352.3"/>
    <property type="gene ID" value="ENSMUSG00000031026.16"/>
</dbReference>
<dbReference type="GeneID" id="330627"/>
<dbReference type="KEGG" id="mmu:330627"/>
<dbReference type="UCSC" id="uc012fsa.1">
    <molecule id="Q924W6-1"/>
    <property type="organism name" value="mouse"/>
</dbReference>
<dbReference type="AGR" id="MGI:2152406"/>
<dbReference type="CTD" id="9866"/>
<dbReference type="MGI" id="MGI:2152406">
    <property type="gene designation" value="Trim66"/>
</dbReference>
<dbReference type="VEuPathDB" id="HostDB:ENSMUSG00000031026"/>
<dbReference type="eggNOG" id="KOG2177">
    <property type="taxonomic scope" value="Eukaryota"/>
</dbReference>
<dbReference type="GeneTree" id="ENSGT00940000159240"/>
<dbReference type="HOGENOM" id="CLU_005817_1_0_1"/>
<dbReference type="InParanoid" id="Q924W6"/>
<dbReference type="OMA" id="PQDFQWP"/>
<dbReference type="OrthoDB" id="1870062at2759"/>
<dbReference type="TreeFam" id="TF106455"/>
<dbReference type="BioGRID-ORCS" id="330627">
    <property type="hits" value="0 hits in 84 CRISPR screens"/>
</dbReference>
<dbReference type="PRO" id="PR:Q924W6"/>
<dbReference type="Proteomes" id="UP000000589">
    <property type="component" value="Chromosome 7"/>
</dbReference>
<dbReference type="RNAct" id="Q924W6">
    <property type="molecule type" value="protein"/>
</dbReference>
<dbReference type="Bgee" id="ENSMUSG00000031026">
    <property type="expression patterns" value="Expressed in olfactory epithelium and 71 other cell types or tissues"/>
</dbReference>
<dbReference type="ExpressionAtlas" id="Q924W6">
    <property type="expression patterns" value="baseline and differential"/>
</dbReference>
<dbReference type="GO" id="GO:0010369">
    <property type="term" value="C:chromocenter"/>
    <property type="evidence" value="ECO:0000314"/>
    <property type="project" value="MGI"/>
</dbReference>
<dbReference type="GO" id="GO:0005634">
    <property type="term" value="C:nucleus"/>
    <property type="evidence" value="ECO:0000314"/>
    <property type="project" value="MGI"/>
</dbReference>
<dbReference type="GO" id="GO:0003682">
    <property type="term" value="F:chromatin binding"/>
    <property type="evidence" value="ECO:0000314"/>
    <property type="project" value="MGI"/>
</dbReference>
<dbReference type="GO" id="GO:0042802">
    <property type="term" value="F:identical protein binding"/>
    <property type="evidence" value="ECO:0000353"/>
    <property type="project" value="MGI"/>
</dbReference>
<dbReference type="GO" id="GO:0008270">
    <property type="term" value="F:zinc ion binding"/>
    <property type="evidence" value="ECO:0007669"/>
    <property type="project" value="UniProtKB-KW"/>
</dbReference>
<dbReference type="GO" id="GO:0045892">
    <property type="term" value="P:negative regulation of DNA-templated transcription"/>
    <property type="evidence" value="ECO:0000314"/>
    <property type="project" value="MGI"/>
</dbReference>
<dbReference type="CDD" id="cd19811">
    <property type="entry name" value="Bbox1_TRIM66"/>
    <property type="match status" value="1"/>
</dbReference>
<dbReference type="CDD" id="cd19794">
    <property type="entry name" value="Bbox2_TRIM66-like"/>
    <property type="match status" value="1"/>
</dbReference>
<dbReference type="CDD" id="cd05502">
    <property type="entry name" value="Bromo_tif1_like"/>
    <property type="match status" value="1"/>
</dbReference>
<dbReference type="FunFam" id="3.30.160.60:FF:000074">
    <property type="entry name" value="Tripartite motif containing 66"/>
    <property type="match status" value="1"/>
</dbReference>
<dbReference type="FunFam" id="1.20.920.10:FF:000036">
    <property type="entry name" value="Tripartite motif-containing protein 66"/>
    <property type="match status" value="1"/>
</dbReference>
<dbReference type="FunFam" id="3.30.40.10:FF:000313">
    <property type="entry name" value="Tripartite motif-containing protein 66"/>
    <property type="match status" value="1"/>
</dbReference>
<dbReference type="Gene3D" id="1.20.920.10">
    <property type="entry name" value="Bromodomain-like"/>
    <property type="match status" value="1"/>
</dbReference>
<dbReference type="Gene3D" id="3.30.160.60">
    <property type="entry name" value="Classic Zinc Finger"/>
    <property type="match status" value="1"/>
</dbReference>
<dbReference type="Gene3D" id="3.30.40.10">
    <property type="entry name" value="Zinc/RING finger domain, C3HC4 (zinc finger)"/>
    <property type="match status" value="2"/>
</dbReference>
<dbReference type="InterPro" id="IPR003649">
    <property type="entry name" value="Bbox_C"/>
</dbReference>
<dbReference type="InterPro" id="IPR001487">
    <property type="entry name" value="Bromodomain"/>
</dbReference>
<dbReference type="InterPro" id="IPR036427">
    <property type="entry name" value="Bromodomain-like_sf"/>
</dbReference>
<dbReference type="InterPro" id="IPR037372">
    <property type="entry name" value="TRIM66_Bbox1_Znf"/>
</dbReference>
<dbReference type="InterPro" id="IPR019786">
    <property type="entry name" value="Zinc_finger_PHD-type_CS"/>
</dbReference>
<dbReference type="InterPro" id="IPR000315">
    <property type="entry name" value="Znf_B-box"/>
</dbReference>
<dbReference type="InterPro" id="IPR011011">
    <property type="entry name" value="Znf_FYVE_PHD"/>
</dbReference>
<dbReference type="InterPro" id="IPR001965">
    <property type="entry name" value="Znf_PHD"/>
</dbReference>
<dbReference type="InterPro" id="IPR019787">
    <property type="entry name" value="Znf_PHD-finger"/>
</dbReference>
<dbReference type="InterPro" id="IPR001841">
    <property type="entry name" value="Znf_RING"/>
</dbReference>
<dbReference type="InterPro" id="IPR013083">
    <property type="entry name" value="Znf_RING/FYVE/PHD"/>
</dbReference>
<dbReference type="InterPro" id="IPR017907">
    <property type="entry name" value="Znf_RING_CS"/>
</dbReference>
<dbReference type="PANTHER" id="PTHR45915">
    <property type="entry name" value="TRANSCRIPTION INTERMEDIARY FACTOR"/>
    <property type="match status" value="1"/>
</dbReference>
<dbReference type="PANTHER" id="PTHR45915:SF7">
    <property type="entry name" value="TRIPARTITE MOTIF-CONTAINING PROTEIN 66"/>
    <property type="match status" value="1"/>
</dbReference>
<dbReference type="Pfam" id="PF00439">
    <property type="entry name" value="Bromodomain"/>
    <property type="match status" value="1"/>
</dbReference>
<dbReference type="Pfam" id="PF00628">
    <property type="entry name" value="PHD"/>
    <property type="match status" value="1"/>
</dbReference>
<dbReference type="Pfam" id="PF00643">
    <property type="entry name" value="zf-B_box"/>
    <property type="match status" value="1"/>
</dbReference>
<dbReference type="Pfam" id="PF25287">
    <property type="entry name" value="zf-B_box_Trim66"/>
    <property type="match status" value="1"/>
</dbReference>
<dbReference type="SMART" id="SM00502">
    <property type="entry name" value="BBC"/>
    <property type="match status" value="1"/>
</dbReference>
<dbReference type="SMART" id="SM00336">
    <property type="entry name" value="BBOX"/>
    <property type="match status" value="2"/>
</dbReference>
<dbReference type="SMART" id="SM00297">
    <property type="entry name" value="BROMO"/>
    <property type="match status" value="1"/>
</dbReference>
<dbReference type="SMART" id="SM00249">
    <property type="entry name" value="PHD"/>
    <property type="match status" value="2"/>
</dbReference>
<dbReference type="SMART" id="SM00184">
    <property type="entry name" value="RING"/>
    <property type="match status" value="2"/>
</dbReference>
<dbReference type="SUPFAM" id="SSF57845">
    <property type="entry name" value="B-box zinc-binding domain"/>
    <property type="match status" value="1"/>
</dbReference>
<dbReference type="SUPFAM" id="SSF47370">
    <property type="entry name" value="Bromodomain"/>
    <property type="match status" value="1"/>
</dbReference>
<dbReference type="SUPFAM" id="SSF57903">
    <property type="entry name" value="FYVE/PHD zinc finger"/>
    <property type="match status" value="1"/>
</dbReference>
<dbReference type="SUPFAM" id="SSF57850">
    <property type="entry name" value="RING/U-box"/>
    <property type="match status" value="1"/>
</dbReference>
<dbReference type="PROSITE" id="PS50014">
    <property type="entry name" value="BROMODOMAIN_2"/>
    <property type="match status" value="1"/>
</dbReference>
<dbReference type="PROSITE" id="PS50119">
    <property type="entry name" value="ZF_BBOX"/>
    <property type="match status" value="2"/>
</dbReference>
<dbReference type="PROSITE" id="PS01359">
    <property type="entry name" value="ZF_PHD_1"/>
    <property type="match status" value="1"/>
</dbReference>
<dbReference type="PROSITE" id="PS50016">
    <property type="entry name" value="ZF_PHD_2"/>
    <property type="match status" value="1"/>
</dbReference>
<dbReference type="PROSITE" id="PS00518">
    <property type="entry name" value="ZF_RING_1"/>
    <property type="match status" value="1"/>
</dbReference>
<dbReference type="PROSITE" id="PS50089">
    <property type="entry name" value="ZF_RING_2"/>
    <property type="match status" value="1"/>
</dbReference>
<reference key="1">
    <citation type="journal article" date="2001" name="Cytogenet. Cell Genet.">
        <title>Comparative genomic sequencing reveals a strikingly similar architecture of a conserved syntenic region on human chromosome 11p15.3 (including gene ST5) and mouse chromosome 7.</title>
        <authorList>
            <person name="Amid C."/>
            <person name="Bahr A."/>
            <person name="Mujica A."/>
            <person name="Sampson N."/>
            <person name="Bikar S.E."/>
            <person name="Winterpacht A."/>
            <person name="Zabel B."/>
            <person name="Hankeln T."/>
            <person name="Schmidt E.R."/>
        </authorList>
    </citation>
    <scope>NUCLEOTIDE SEQUENCE [GENOMIC DNA] (ISOFORM 2)</scope>
</reference>
<reference key="2">
    <citation type="journal article" date="2004" name="J. Biol. Chem.">
        <title>TIF1delta, a novel HP1-interacting member of the transcriptional intermediary factor 1 (TIF1) family expressed by elongating spermatids.</title>
        <authorList>
            <person name="Khetchoumian K."/>
            <person name="Teletin M."/>
            <person name="Mark M."/>
            <person name="Lerouge T."/>
            <person name="Cervino M."/>
            <person name="Oulad-Abdelghani M."/>
            <person name="Chambon P."/>
            <person name="Losson R."/>
        </authorList>
    </citation>
    <scope>NUCLEOTIDE SEQUENCE [MRNA] (ISOFORMS 1 AND 3)</scope>
    <scope>FUNCTION</scope>
    <scope>TISSUE SPECIFICITY</scope>
    <scope>DEVELOPMENTAL STAGE</scope>
    <scope>MOTIF</scope>
    <scope>INTERACTION WITH CBX5</scope>
    <scope>CBX1 AND CBX3</scope>
    <scope>MUTAGENESIS OF VAL-991 AND LEU-993</scope>
    <scope>SUBCELLULAR LOCATION</scope>
</reference>
<reference key="3">
    <citation type="journal article" date="2009" name="PLoS Biol.">
        <title>Lineage-specific biology revealed by a finished genome assembly of the mouse.</title>
        <authorList>
            <person name="Church D.M."/>
            <person name="Goodstadt L."/>
            <person name="Hillier L.W."/>
            <person name="Zody M.C."/>
            <person name="Goldstein S."/>
            <person name="She X."/>
            <person name="Bult C.J."/>
            <person name="Agarwala R."/>
            <person name="Cherry J.L."/>
            <person name="DiCuccio M."/>
            <person name="Hlavina W."/>
            <person name="Kapustin Y."/>
            <person name="Meric P."/>
            <person name="Maglott D."/>
            <person name="Birtle Z."/>
            <person name="Marques A.C."/>
            <person name="Graves T."/>
            <person name="Zhou S."/>
            <person name="Teague B."/>
            <person name="Potamousis K."/>
            <person name="Churas C."/>
            <person name="Place M."/>
            <person name="Herschleb J."/>
            <person name="Runnheim R."/>
            <person name="Forrest D."/>
            <person name="Amos-Landgraf J."/>
            <person name="Schwartz D.C."/>
            <person name="Cheng Z."/>
            <person name="Lindblad-Toh K."/>
            <person name="Eichler E.E."/>
            <person name="Ponting C.P."/>
        </authorList>
    </citation>
    <scope>NUCLEOTIDE SEQUENCE [LARGE SCALE GENOMIC DNA]</scope>
    <source>
        <strain>C57BL/6J</strain>
    </source>
</reference>
<name>TRI66_MOUSE</name>
<gene>
    <name type="primary">Trim66</name>
    <name type="synonym">Tif1d</name>
</gene>
<organism>
    <name type="scientific">Mus musculus</name>
    <name type="common">Mouse</name>
    <dbReference type="NCBI Taxonomy" id="10090"/>
    <lineage>
        <taxon>Eukaryota</taxon>
        <taxon>Metazoa</taxon>
        <taxon>Chordata</taxon>
        <taxon>Craniata</taxon>
        <taxon>Vertebrata</taxon>
        <taxon>Euteleostomi</taxon>
        <taxon>Mammalia</taxon>
        <taxon>Eutheria</taxon>
        <taxon>Euarchontoglires</taxon>
        <taxon>Glires</taxon>
        <taxon>Rodentia</taxon>
        <taxon>Myomorpha</taxon>
        <taxon>Muroidea</taxon>
        <taxon>Muridae</taxon>
        <taxon>Murinae</taxon>
        <taxon>Mus</taxon>
        <taxon>Mus</taxon>
    </lineage>
</organism>
<feature type="chain" id="PRO_0000220376" description="Tripartite motif-containing protein 66">
    <location>
        <begin position="1"/>
        <end position="1344"/>
    </location>
</feature>
<feature type="domain" description="Bromo" evidence="3">
    <location>
        <begin position="1169"/>
        <end position="1275"/>
    </location>
</feature>
<feature type="zinc finger region" description="RING-type" evidence="5">
    <location>
        <begin position="28"/>
        <end position="79"/>
    </location>
</feature>
<feature type="zinc finger region" description="B box-type 1; atypical" evidence="2">
    <location>
        <begin position="103"/>
        <end position="148"/>
    </location>
</feature>
<feature type="zinc finger region" description="B box-type 2" evidence="2">
    <location>
        <begin position="162"/>
        <end position="203"/>
    </location>
</feature>
<feature type="zinc finger region" description="PHD-type" evidence="4">
    <location>
        <begin position="1098"/>
        <end position="1145"/>
    </location>
</feature>
<feature type="region of interest" description="Disordered" evidence="6">
    <location>
        <begin position="478"/>
        <end position="513"/>
    </location>
</feature>
<feature type="region of interest" description="Disordered" evidence="6">
    <location>
        <begin position="541"/>
        <end position="600"/>
    </location>
</feature>
<feature type="region of interest" description="Disordered" evidence="6">
    <location>
        <begin position="655"/>
        <end position="719"/>
    </location>
</feature>
<feature type="region of interest" description="Disordered" evidence="6">
    <location>
        <begin position="861"/>
        <end position="888"/>
    </location>
</feature>
<feature type="region of interest" description="Disordered" evidence="6">
    <location>
        <begin position="903"/>
        <end position="924"/>
    </location>
</feature>
<feature type="region of interest" description="Disordered" evidence="6">
    <location>
        <begin position="1284"/>
        <end position="1344"/>
    </location>
</feature>
<feature type="coiled-coil region" evidence="1">
    <location>
        <begin position="232"/>
        <end position="302"/>
    </location>
</feature>
<feature type="short sequence motif" description="PxVxL motif">
    <location>
        <begin position="989"/>
        <end position="993"/>
    </location>
</feature>
<feature type="compositionally biased region" description="Pro residues" evidence="6">
    <location>
        <begin position="481"/>
        <end position="496"/>
    </location>
</feature>
<feature type="compositionally biased region" description="Polar residues" evidence="6">
    <location>
        <begin position="499"/>
        <end position="512"/>
    </location>
</feature>
<feature type="compositionally biased region" description="Pro residues" evidence="6">
    <location>
        <begin position="559"/>
        <end position="580"/>
    </location>
</feature>
<feature type="compositionally biased region" description="Polar residues" evidence="6">
    <location>
        <begin position="656"/>
        <end position="668"/>
    </location>
</feature>
<feature type="compositionally biased region" description="Pro residues" evidence="6">
    <location>
        <begin position="672"/>
        <end position="681"/>
    </location>
</feature>
<feature type="compositionally biased region" description="Polar residues" evidence="6">
    <location>
        <begin position="904"/>
        <end position="916"/>
    </location>
</feature>
<feature type="binding site" evidence="2">
    <location>
        <position position="107"/>
    </location>
    <ligand>
        <name>Zn(2+)</name>
        <dbReference type="ChEBI" id="CHEBI:29105"/>
        <label>1</label>
    </ligand>
</feature>
<feature type="binding site" evidence="2">
    <location>
        <position position="110"/>
    </location>
    <ligand>
        <name>Zn(2+)</name>
        <dbReference type="ChEBI" id="CHEBI:29105"/>
        <label>1</label>
    </ligand>
</feature>
<feature type="binding site" evidence="2">
    <location>
        <position position="131"/>
    </location>
    <ligand>
        <name>Zn(2+)</name>
        <dbReference type="ChEBI" id="CHEBI:29105"/>
        <label>1</label>
    </ligand>
</feature>
<feature type="binding site" evidence="2">
    <location>
        <position position="137"/>
    </location>
    <ligand>
        <name>Zn(2+)</name>
        <dbReference type="ChEBI" id="CHEBI:29105"/>
        <label>1</label>
    </ligand>
</feature>
<feature type="binding site" evidence="2">
    <location>
        <position position="167"/>
    </location>
    <ligand>
        <name>Zn(2+)</name>
        <dbReference type="ChEBI" id="CHEBI:29105"/>
        <label>2</label>
    </ligand>
</feature>
<feature type="binding site" evidence="2">
    <location>
        <position position="170"/>
    </location>
    <ligand>
        <name>Zn(2+)</name>
        <dbReference type="ChEBI" id="CHEBI:29105"/>
        <label>2</label>
    </ligand>
</feature>
<feature type="binding site" evidence="2">
    <location>
        <position position="190"/>
    </location>
    <ligand>
        <name>Zn(2+)</name>
        <dbReference type="ChEBI" id="CHEBI:29105"/>
        <label>2</label>
    </ligand>
</feature>
<feature type="binding site" evidence="2">
    <location>
        <position position="195"/>
    </location>
    <ligand>
        <name>Zn(2+)</name>
        <dbReference type="ChEBI" id="CHEBI:29105"/>
        <label>2</label>
    </ligand>
</feature>
<feature type="splice variant" id="VSP_061682" description="In isoform 2 and isoform 3." evidence="8 9">
    <location>
        <begin position="1"/>
        <end position="102"/>
    </location>
</feature>
<feature type="splice variant" id="VSP_061683" description="In isoform 2." evidence="8">
    <location>
        <begin position="199"/>
        <end position="200"/>
    </location>
</feature>
<feature type="splice variant" id="VSP_061684" description="In isoform 2." evidence="8">
    <original>MESEDCTRFSDSVGQGPTASSLDGPKDLAIPS</original>
    <variation>V</variation>
    <location>
        <begin position="896"/>
        <end position="927"/>
    </location>
</feature>
<feature type="mutagenesis site" description="Drastic decrease of CBX5, CBX1 and CBX3 binding; When associated with A-993." evidence="7">
    <original>V</original>
    <variation>A</variation>
    <location>
        <position position="991"/>
    </location>
</feature>
<feature type="mutagenesis site" description="Drastic decrease of CBX5, CBX1 and CBX3 binding; When associated with A-991." evidence="7">
    <original>L</original>
    <variation>A</variation>
    <location>
        <position position="993"/>
    </location>
</feature>
<feature type="sequence conflict" description="In Ref. 2; AAS78677/AAS78676." evidence="10" ref="2">
    <original>L</original>
    <variation>I</variation>
    <location>
        <position position="145"/>
    </location>
</feature>
<feature type="sequence conflict" description="In Ref. 2; AAS78677/AAS78676." evidence="10" ref="2">
    <original>P</original>
    <variation>S</variation>
    <location>
        <position position="920"/>
    </location>
</feature>
<feature type="sequence conflict" description="In Ref. 2; AAS78677/AAS78676." evidence="10" ref="2">
    <original>A</original>
    <variation>T</variation>
    <location>
        <position position="981"/>
    </location>
</feature>
<feature type="sequence conflict" description="In Ref. 2; AAS78677/AAS78676." evidence="10" ref="2">
    <original>N</original>
    <variation>S</variation>
    <location>
        <position position="1021"/>
    </location>
</feature>
<feature type="turn" evidence="11">
    <location>
        <begin position="1102"/>
        <end position="1104"/>
    </location>
</feature>
<feature type="strand" evidence="11">
    <location>
        <begin position="1108"/>
        <end position="1112"/>
    </location>
</feature>
<feature type="strand" evidence="11">
    <location>
        <begin position="1114"/>
        <end position="1117"/>
    </location>
</feature>
<feature type="turn" evidence="11">
    <location>
        <begin position="1122"/>
        <end position="1124"/>
    </location>
</feature>
<feature type="strand" evidence="11">
    <location>
        <begin position="1125"/>
        <end position="1127"/>
    </location>
</feature>
<feature type="turn" evidence="11">
    <location>
        <begin position="1140"/>
        <end position="1142"/>
    </location>
</feature>
<feature type="strand" evidence="11">
    <location>
        <begin position="1145"/>
        <end position="1147"/>
    </location>
</feature>
<feature type="helix" evidence="11">
    <location>
        <begin position="1155"/>
        <end position="1157"/>
    </location>
</feature>
<feature type="turn" evidence="11">
    <location>
        <begin position="1164"/>
        <end position="1166"/>
    </location>
</feature>
<feature type="helix" evidence="11">
    <location>
        <begin position="1172"/>
        <end position="1187"/>
    </location>
</feature>
<feature type="helix" evidence="11">
    <location>
        <begin position="1189"/>
        <end position="1194"/>
    </location>
</feature>
<feature type="helix" evidence="11">
    <location>
        <begin position="1203"/>
        <end position="1208"/>
    </location>
</feature>
<feature type="helix" evidence="11">
    <location>
        <begin position="1215"/>
        <end position="1221"/>
    </location>
</feature>
<feature type="helix" evidence="11">
    <location>
        <begin position="1233"/>
        <end position="1250"/>
    </location>
</feature>
<feature type="helix" evidence="11">
    <location>
        <begin position="1256"/>
        <end position="1275"/>
    </location>
</feature>
<comment type="function">
    <text evidence="7">May function as transcription repressor; The repressive effects are mediated, at least in part, by recruitment of deacetylase activity. May play a role as negative regulator of postmeiotic genes acting through CBX3 complex formation and centromere association.</text>
</comment>
<comment type="subunit">
    <text evidence="7">Can form homodimers and heterodimers. Interacts with CBX5, CBX1 and CBX3 via PxVxL motif.</text>
</comment>
<comment type="subcellular location">
    <subcellularLocation>
        <location evidence="7">Nucleus</location>
    </subcellularLocation>
    <text>Forms discrete foci within the centromeric chromocenter and surrounding nucleoplasm.</text>
</comment>
<comment type="alternative products">
    <event type="alternative splicing"/>
    <isoform>
        <id>Q924W6-1</id>
        <name>1</name>
        <sequence type="displayed"/>
    </isoform>
    <isoform>
        <id>Q924W6-2</id>
        <name>2</name>
        <sequence type="described" ref="VSP_061682 VSP_061683 VSP_061684"/>
    </isoform>
    <isoform>
        <id>Q924W6-3</id>
        <name>3</name>
        <sequence type="described" ref="VSP_061682"/>
    </isoform>
</comment>
<comment type="tissue specificity">
    <text evidence="7">Predominant in testis, specifically in elongating spermatids.</text>
</comment>
<comment type="developmental stage">
    <text evidence="7">No significant expression in testis of 2- or 3-week-old mouse, but clear detection at the age of 4 weeks.</text>
</comment>
<sequence length="1344" mass="148001">MSPGLPVSIPSQPHCSTDERVEALAPTCSMCGRDLQAEGSRLLPCQHLLCKDCYQGFMQELGHATRAYPGKLISCPGCQRVYLTRDVTEHIFLQCFSPVKPTMARNCSECKEKRAAHILCTYCNRWLCSSCTEEHRHVPAPGGPLFARAQKGSSGVNGGSGDFALYCPLHTQEVLKLFCETCDVLTCHSCLMVEHKEHRCRHVEEVLQNQRMLLESVTSQVAHKKSSLQTSAKQIEDRIFEVKHQHRKVENQIKMAKMVLMNELNKQANGLIEELEGITNERKRKLEQQLQSIMVLNRQFEHVQNFINWAVCSKSSVPFLFSKELIVFQMQRLLETRCNTDPGSPWSIRFTWEPNFWTKQLASLGCITTEGGQLTRADAAAASYGSLQGQPSFYQSHQAPMAQQEALSHPSHKFQSPALCSSSVCCSHCSPVSPSLKGQVPPPSIHPAHSFRQPSEMVPHQLGSLQCSTLLPREKELACSPHPPKLMQPWLEPQPPAEQESTSQRPGPQLVSQPVCIVPPQDVQPGAHAQPTIQTPSIQVQLGHHQKLKLSHFQQQPQQQPPPPPPPPPPPQHAPPPLPPSQHLASSQHESPPGPACSQNVDIMHHKFELEEMQKDLELLLQAQQPSLQLSQTKSPQHLQQTIVGQINYIVRQPAPVQSQSQEETLQVTEEPPAPEGPKPALPVDKNTAAPLPQTSGEETPHSVPPVDGTSQHSSPNVVRKHATSVSIMGFSNTVEMELSSTRLARTIEPQIHRVSSLTAAPTHTIPSLLSGPPQTVSSLMSVSNHAMPSLTASHLQPVPNLVRGTFQSTSNLRGDSSQAITGLASNHSQAGPSLMSGHTQAAPSLATCPLQGMPPVSDVHVEPRSVSSPGSGPAAESLGTRDGAESSLGNALCKMESEDCTRFSDSVGQGPTASSLDGPKDLAIPSELEEPINLSVKKPFLAPVINTSTALQQYRNPKEYENFEQGALELDTKENSDIRAISSEPKIPYVRLERLKICAASSGEMPVFKLKPQKNSQDGNFLLVIECGTESSSMSIKVSQNSLPDASQGPGLGGRKVTVTSLTGQQPQEVESTSEEHRLIPRAPGAKKNTPAPIENEDFCAVCINGGELLCCDRCPKVYHLSCHVPALLSFPGGEWVCTLCRSLTQPEMEYDCENARYGHPGVRVLPGLSMYDQKKCEKLVLSLCCNSLSLPFHEPVSPLARHYYQIIKRPMDLSIIRRKLQKKDPAHYTTPEEVVSDVRLMFWNCAKFNYPDSEVAEAGRCLEVFFEGWLKEIYPDKCFAQPQQEDSDSEDVSGESGCSTPQGFPWPPYMQEGIQPKRRRRHMENEKTKRVSFRLANSISQV</sequence>
<keyword id="KW-0002">3D-structure</keyword>
<keyword id="KW-0025">Alternative splicing</keyword>
<keyword id="KW-0103">Bromodomain</keyword>
<keyword id="KW-0175">Coiled coil</keyword>
<keyword id="KW-0479">Metal-binding</keyword>
<keyword id="KW-0539">Nucleus</keyword>
<keyword id="KW-1185">Reference proteome</keyword>
<keyword id="KW-0677">Repeat</keyword>
<keyword id="KW-0862">Zinc</keyword>
<keyword id="KW-0863">Zinc-finger</keyword>
<evidence type="ECO:0000255" key="1"/>
<evidence type="ECO:0000255" key="2">
    <source>
        <dbReference type="PROSITE-ProRule" id="PRU00024"/>
    </source>
</evidence>
<evidence type="ECO:0000255" key="3">
    <source>
        <dbReference type="PROSITE-ProRule" id="PRU00035"/>
    </source>
</evidence>
<evidence type="ECO:0000255" key="4">
    <source>
        <dbReference type="PROSITE-ProRule" id="PRU00146"/>
    </source>
</evidence>
<evidence type="ECO:0000255" key="5">
    <source>
        <dbReference type="PROSITE-ProRule" id="PRU00175"/>
    </source>
</evidence>
<evidence type="ECO:0000256" key="6">
    <source>
        <dbReference type="SAM" id="MobiDB-lite"/>
    </source>
</evidence>
<evidence type="ECO:0000269" key="7">
    <source>
    </source>
</evidence>
<evidence type="ECO:0000303" key="8">
    <source>
    </source>
</evidence>
<evidence type="ECO:0000303" key="9">
    <source>
    </source>
</evidence>
<evidence type="ECO:0000305" key="10"/>
<evidence type="ECO:0007829" key="11">
    <source>
        <dbReference type="PDB" id="7EBK"/>
    </source>
</evidence>
<proteinExistence type="evidence at protein level"/>